<dbReference type="EC" id="3.6.5.-" evidence="1"/>
<dbReference type="EMBL" id="CP000468">
    <property type="protein sequence ID" value="ABJ02676.1"/>
    <property type="molecule type" value="Genomic_DNA"/>
</dbReference>
<dbReference type="SMR" id="A1AG86"/>
<dbReference type="KEGG" id="ecv:APECO1_3249"/>
<dbReference type="HOGENOM" id="CLU_011747_2_0_6"/>
<dbReference type="Proteomes" id="UP000008216">
    <property type="component" value="Chromosome"/>
</dbReference>
<dbReference type="GO" id="GO:0005737">
    <property type="term" value="C:cytoplasm"/>
    <property type="evidence" value="ECO:0007669"/>
    <property type="project" value="UniProtKB-SubCell"/>
</dbReference>
<dbReference type="GO" id="GO:0005525">
    <property type="term" value="F:GTP binding"/>
    <property type="evidence" value="ECO:0007669"/>
    <property type="project" value="UniProtKB-UniRule"/>
</dbReference>
<dbReference type="GO" id="GO:0003924">
    <property type="term" value="F:GTPase activity"/>
    <property type="evidence" value="ECO:0007669"/>
    <property type="project" value="UniProtKB-UniRule"/>
</dbReference>
<dbReference type="GO" id="GO:0000287">
    <property type="term" value="F:magnesium ion binding"/>
    <property type="evidence" value="ECO:0007669"/>
    <property type="project" value="InterPro"/>
</dbReference>
<dbReference type="GO" id="GO:0042254">
    <property type="term" value="P:ribosome biogenesis"/>
    <property type="evidence" value="ECO:0007669"/>
    <property type="project" value="UniProtKB-UniRule"/>
</dbReference>
<dbReference type="CDD" id="cd01898">
    <property type="entry name" value="Obg"/>
    <property type="match status" value="1"/>
</dbReference>
<dbReference type="FunFam" id="2.70.210.12:FF:000001">
    <property type="entry name" value="GTPase Obg"/>
    <property type="match status" value="1"/>
</dbReference>
<dbReference type="FunFam" id="3.40.50.300:FF:000185">
    <property type="entry name" value="GTPase Obg"/>
    <property type="match status" value="1"/>
</dbReference>
<dbReference type="Gene3D" id="2.70.210.12">
    <property type="entry name" value="GTP1/OBG domain"/>
    <property type="match status" value="1"/>
</dbReference>
<dbReference type="Gene3D" id="3.40.50.300">
    <property type="entry name" value="P-loop containing nucleotide triphosphate hydrolases"/>
    <property type="match status" value="1"/>
</dbReference>
<dbReference type="HAMAP" id="MF_01454">
    <property type="entry name" value="GTPase_Obg"/>
    <property type="match status" value="1"/>
</dbReference>
<dbReference type="InterPro" id="IPR031167">
    <property type="entry name" value="G_OBG"/>
</dbReference>
<dbReference type="InterPro" id="IPR006073">
    <property type="entry name" value="GTP-bd"/>
</dbReference>
<dbReference type="InterPro" id="IPR014100">
    <property type="entry name" value="GTP-bd_Obg/CgtA"/>
</dbReference>
<dbReference type="InterPro" id="IPR006074">
    <property type="entry name" value="GTP1-OBG_CS"/>
</dbReference>
<dbReference type="InterPro" id="IPR006169">
    <property type="entry name" value="GTP1_OBG_dom"/>
</dbReference>
<dbReference type="InterPro" id="IPR036726">
    <property type="entry name" value="GTP1_OBG_dom_sf"/>
</dbReference>
<dbReference type="InterPro" id="IPR045086">
    <property type="entry name" value="OBG_GTPase"/>
</dbReference>
<dbReference type="InterPro" id="IPR027417">
    <property type="entry name" value="P-loop_NTPase"/>
</dbReference>
<dbReference type="NCBIfam" id="TIGR02729">
    <property type="entry name" value="Obg_CgtA"/>
    <property type="match status" value="1"/>
</dbReference>
<dbReference type="NCBIfam" id="NF008955">
    <property type="entry name" value="PRK12297.1"/>
    <property type="match status" value="1"/>
</dbReference>
<dbReference type="NCBIfam" id="NF008956">
    <property type="entry name" value="PRK12299.1"/>
    <property type="match status" value="1"/>
</dbReference>
<dbReference type="PANTHER" id="PTHR11702">
    <property type="entry name" value="DEVELOPMENTALLY REGULATED GTP-BINDING PROTEIN-RELATED"/>
    <property type="match status" value="1"/>
</dbReference>
<dbReference type="PANTHER" id="PTHR11702:SF31">
    <property type="entry name" value="MITOCHONDRIAL RIBOSOME-ASSOCIATED GTPASE 2"/>
    <property type="match status" value="1"/>
</dbReference>
<dbReference type="Pfam" id="PF01018">
    <property type="entry name" value="GTP1_OBG"/>
    <property type="match status" value="1"/>
</dbReference>
<dbReference type="Pfam" id="PF01926">
    <property type="entry name" value="MMR_HSR1"/>
    <property type="match status" value="1"/>
</dbReference>
<dbReference type="PIRSF" id="PIRSF002401">
    <property type="entry name" value="GTP_bd_Obg/CgtA"/>
    <property type="match status" value="1"/>
</dbReference>
<dbReference type="PRINTS" id="PR00326">
    <property type="entry name" value="GTP1OBG"/>
</dbReference>
<dbReference type="SUPFAM" id="SSF82051">
    <property type="entry name" value="Obg GTP-binding protein N-terminal domain"/>
    <property type="match status" value="1"/>
</dbReference>
<dbReference type="SUPFAM" id="SSF52540">
    <property type="entry name" value="P-loop containing nucleoside triphosphate hydrolases"/>
    <property type="match status" value="1"/>
</dbReference>
<dbReference type="PROSITE" id="PS51710">
    <property type="entry name" value="G_OBG"/>
    <property type="match status" value="1"/>
</dbReference>
<dbReference type="PROSITE" id="PS00905">
    <property type="entry name" value="GTP1_OBG"/>
    <property type="match status" value="1"/>
</dbReference>
<dbReference type="PROSITE" id="PS51883">
    <property type="entry name" value="OBG"/>
    <property type="match status" value="1"/>
</dbReference>
<feature type="chain" id="PRO_0000385921" description="GTPase Obg">
    <location>
        <begin position="1"/>
        <end position="390"/>
    </location>
</feature>
<feature type="domain" description="Obg" evidence="2">
    <location>
        <begin position="1"/>
        <end position="159"/>
    </location>
</feature>
<feature type="domain" description="OBG-type G" evidence="1">
    <location>
        <begin position="160"/>
        <end position="333"/>
    </location>
</feature>
<feature type="region of interest" description="Disordered" evidence="3">
    <location>
        <begin position="127"/>
        <end position="147"/>
    </location>
</feature>
<feature type="compositionally biased region" description="Polar residues" evidence="3">
    <location>
        <begin position="129"/>
        <end position="145"/>
    </location>
</feature>
<feature type="binding site" evidence="1">
    <location>
        <begin position="166"/>
        <end position="173"/>
    </location>
    <ligand>
        <name>GTP</name>
        <dbReference type="ChEBI" id="CHEBI:37565"/>
    </ligand>
</feature>
<feature type="binding site" evidence="1">
    <location>
        <position position="173"/>
    </location>
    <ligand>
        <name>Mg(2+)</name>
        <dbReference type="ChEBI" id="CHEBI:18420"/>
    </ligand>
</feature>
<feature type="binding site" evidence="1">
    <location>
        <begin position="191"/>
        <end position="195"/>
    </location>
    <ligand>
        <name>GTP</name>
        <dbReference type="ChEBI" id="CHEBI:37565"/>
    </ligand>
</feature>
<feature type="binding site" evidence="1">
    <location>
        <position position="193"/>
    </location>
    <ligand>
        <name>Mg(2+)</name>
        <dbReference type="ChEBI" id="CHEBI:18420"/>
    </ligand>
</feature>
<feature type="binding site" evidence="1">
    <location>
        <begin position="213"/>
        <end position="216"/>
    </location>
    <ligand>
        <name>GTP</name>
        <dbReference type="ChEBI" id="CHEBI:37565"/>
    </ligand>
</feature>
<feature type="binding site" evidence="1">
    <location>
        <begin position="283"/>
        <end position="286"/>
    </location>
    <ligand>
        <name>GTP</name>
        <dbReference type="ChEBI" id="CHEBI:37565"/>
    </ligand>
</feature>
<feature type="binding site" evidence="1">
    <location>
        <begin position="314"/>
        <end position="316"/>
    </location>
    <ligand>
        <name>GTP</name>
        <dbReference type="ChEBI" id="CHEBI:37565"/>
    </ligand>
</feature>
<keyword id="KW-0963">Cytoplasm</keyword>
<keyword id="KW-0342">GTP-binding</keyword>
<keyword id="KW-0378">Hydrolase</keyword>
<keyword id="KW-0460">Magnesium</keyword>
<keyword id="KW-0479">Metal-binding</keyword>
<keyword id="KW-0547">Nucleotide-binding</keyword>
<keyword id="KW-1185">Reference proteome</keyword>
<gene>
    <name evidence="1" type="primary">obg</name>
    <name type="ordered locus">Ecok1_31820</name>
    <name type="ORF">APECO1_3249</name>
</gene>
<comment type="function">
    <text evidence="1">An essential GTPase which binds GTP, GDP and possibly (p)ppGpp with moderate affinity, with high nucleotide exchange rates and a fairly low GTP hydrolysis rate. Plays a role in control of the cell cycle, stress response, ribosome biogenesis and in those bacteria that undergo differentiation, in morphogenesis control.</text>
</comment>
<comment type="cofactor">
    <cofactor evidence="1">
        <name>Mg(2+)</name>
        <dbReference type="ChEBI" id="CHEBI:18420"/>
    </cofactor>
</comment>
<comment type="subunit">
    <text evidence="1">Monomer.</text>
</comment>
<comment type="subcellular location">
    <subcellularLocation>
        <location evidence="1">Cytoplasm</location>
    </subcellularLocation>
</comment>
<comment type="similarity">
    <text evidence="1">Belongs to the TRAFAC class OBG-HflX-like GTPase superfamily. OBG GTPase family.</text>
</comment>
<name>OBG_ECOK1</name>
<accession>A1AG86</accession>
<protein>
    <recommendedName>
        <fullName evidence="1">GTPase Obg</fullName>
        <ecNumber evidence="1">3.6.5.-</ecNumber>
    </recommendedName>
    <alternativeName>
        <fullName evidence="1">GTP-binding protein Obg</fullName>
    </alternativeName>
</protein>
<proteinExistence type="inferred from homology"/>
<sequence>MKFVDEASILVVAGDGGNGCVSFRREKYIPKGGPDGGDGGDGGDVWMEADENLNTLIDYRFEKSFRAERGQNGASRDCTGKRGKDVTIKVPVGTRVIDQGTGETMGDMTKHGQRLLVAKGGWHGLGNTRFKSSVNRTPRQKTNGTPGDKRELLLELMLLADVGMLGMPNAGKSTFIRAVSAAKPKVADYPFTTLVPSLGVVRMDNEKSFVVADIPGLIEGAAEGAGLGIRFLKHLERCRVLLHLIDIDPIDGTDPVENARIIISELEKYSQDLAAKPRWLVFNKIDLLDKVEAEEKAKAIAEALGWEDKYYLISAASGLGVKDLCWDVMTFIIENPVVQAEEAKQPEKVEFMWDDYHRQQLEEIAEEDDEDWDDDWDEDDEEGVEFIYKR</sequence>
<organism>
    <name type="scientific">Escherichia coli O1:K1 / APEC</name>
    <dbReference type="NCBI Taxonomy" id="405955"/>
    <lineage>
        <taxon>Bacteria</taxon>
        <taxon>Pseudomonadati</taxon>
        <taxon>Pseudomonadota</taxon>
        <taxon>Gammaproteobacteria</taxon>
        <taxon>Enterobacterales</taxon>
        <taxon>Enterobacteriaceae</taxon>
        <taxon>Escherichia</taxon>
    </lineage>
</organism>
<reference key="1">
    <citation type="journal article" date="2007" name="J. Bacteriol.">
        <title>The genome sequence of avian pathogenic Escherichia coli strain O1:K1:H7 shares strong similarities with human extraintestinal pathogenic E. coli genomes.</title>
        <authorList>
            <person name="Johnson T.J."/>
            <person name="Kariyawasam S."/>
            <person name="Wannemuehler Y."/>
            <person name="Mangiamele P."/>
            <person name="Johnson S.J."/>
            <person name="Doetkott C."/>
            <person name="Skyberg J.A."/>
            <person name="Lynne A.M."/>
            <person name="Johnson J.R."/>
            <person name="Nolan L.K."/>
        </authorList>
    </citation>
    <scope>NUCLEOTIDE SEQUENCE [LARGE SCALE GENOMIC DNA]</scope>
</reference>
<evidence type="ECO:0000255" key="1">
    <source>
        <dbReference type="HAMAP-Rule" id="MF_01454"/>
    </source>
</evidence>
<evidence type="ECO:0000255" key="2">
    <source>
        <dbReference type="PROSITE-ProRule" id="PRU01231"/>
    </source>
</evidence>
<evidence type="ECO:0000256" key="3">
    <source>
        <dbReference type="SAM" id="MobiDB-lite"/>
    </source>
</evidence>